<reference key="1">
    <citation type="journal article" date="2002" name="Nature">
        <title>The genome sequence of Schizosaccharomyces pombe.</title>
        <authorList>
            <person name="Wood V."/>
            <person name="Gwilliam R."/>
            <person name="Rajandream M.A."/>
            <person name="Lyne M.H."/>
            <person name="Lyne R."/>
            <person name="Stewart A."/>
            <person name="Sgouros J.G."/>
            <person name="Peat N."/>
            <person name="Hayles J."/>
            <person name="Baker S.G."/>
            <person name="Basham D."/>
            <person name="Bowman S."/>
            <person name="Brooks K."/>
            <person name="Brown D."/>
            <person name="Brown S."/>
            <person name="Chillingworth T."/>
            <person name="Churcher C.M."/>
            <person name="Collins M."/>
            <person name="Connor R."/>
            <person name="Cronin A."/>
            <person name="Davis P."/>
            <person name="Feltwell T."/>
            <person name="Fraser A."/>
            <person name="Gentles S."/>
            <person name="Goble A."/>
            <person name="Hamlin N."/>
            <person name="Harris D.E."/>
            <person name="Hidalgo J."/>
            <person name="Hodgson G."/>
            <person name="Holroyd S."/>
            <person name="Hornsby T."/>
            <person name="Howarth S."/>
            <person name="Huckle E.J."/>
            <person name="Hunt S."/>
            <person name="Jagels K."/>
            <person name="James K.D."/>
            <person name="Jones L."/>
            <person name="Jones M."/>
            <person name="Leather S."/>
            <person name="McDonald S."/>
            <person name="McLean J."/>
            <person name="Mooney P."/>
            <person name="Moule S."/>
            <person name="Mungall K.L."/>
            <person name="Murphy L.D."/>
            <person name="Niblett D."/>
            <person name="Odell C."/>
            <person name="Oliver K."/>
            <person name="O'Neil S."/>
            <person name="Pearson D."/>
            <person name="Quail M.A."/>
            <person name="Rabbinowitsch E."/>
            <person name="Rutherford K.M."/>
            <person name="Rutter S."/>
            <person name="Saunders D."/>
            <person name="Seeger K."/>
            <person name="Sharp S."/>
            <person name="Skelton J."/>
            <person name="Simmonds M.N."/>
            <person name="Squares R."/>
            <person name="Squares S."/>
            <person name="Stevens K."/>
            <person name="Taylor K."/>
            <person name="Taylor R.G."/>
            <person name="Tivey A."/>
            <person name="Walsh S.V."/>
            <person name="Warren T."/>
            <person name="Whitehead S."/>
            <person name="Woodward J.R."/>
            <person name="Volckaert G."/>
            <person name="Aert R."/>
            <person name="Robben J."/>
            <person name="Grymonprez B."/>
            <person name="Weltjens I."/>
            <person name="Vanstreels E."/>
            <person name="Rieger M."/>
            <person name="Schaefer M."/>
            <person name="Mueller-Auer S."/>
            <person name="Gabel C."/>
            <person name="Fuchs M."/>
            <person name="Duesterhoeft A."/>
            <person name="Fritzc C."/>
            <person name="Holzer E."/>
            <person name="Moestl D."/>
            <person name="Hilbert H."/>
            <person name="Borzym K."/>
            <person name="Langer I."/>
            <person name="Beck A."/>
            <person name="Lehrach H."/>
            <person name="Reinhardt R."/>
            <person name="Pohl T.M."/>
            <person name="Eger P."/>
            <person name="Zimmermann W."/>
            <person name="Wedler H."/>
            <person name="Wambutt R."/>
            <person name="Purnelle B."/>
            <person name="Goffeau A."/>
            <person name="Cadieu E."/>
            <person name="Dreano S."/>
            <person name="Gloux S."/>
            <person name="Lelaure V."/>
            <person name="Mottier S."/>
            <person name="Galibert F."/>
            <person name="Aves S.J."/>
            <person name="Xiang Z."/>
            <person name="Hunt C."/>
            <person name="Moore K."/>
            <person name="Hurst S.M."/>
            <person name="Lucas M."/>
            <person name="Rochet M."/>
            <person name="Gaillardin C."/>
            <person name="Tallada V.A."/>
            <person name="Garzon A."/>
            <person name="Thode G."/>
            <person name="Daga R.R."/>
            <person name="Cruzado L."/>
            <person name="Jimenez J."/>
            <person name="Sanchez M."/>
            <person name="del Rey F."/>
            <person name="Benito J."/>
            <person name="Dominguez A."/>
            <person name="Revuelta J.L."/>
            <person name="Moreno S."/>
            <person name="Armstrong J."/>
            <person name="Forsburg S.L."/>
            <person name="Cerutti L."/>
            <person name="Lowe T."/>
            <person name="McCombie W.R."/>
            <person name="Paulsen I."/>
            <person name="Potashkin J."/>
            <person name="Shpakovski G.V."/>
            <person name="Ussery D."/>
            <person name="Barrell B.G."/>
            <person name="Nurse P."/>
        </authorList>
    </citation>
    <scope>NUCLEOTIDE SEQUENCE [LARGE SCALE GENOMIC DNA]</scope>
    <source>
        <strain>972 / ATCC 24843</strain>
    </source>
</reference>
<protein>
    <recommendedName>
        <fullName>Uncharacterized protein C887.08</fullName>
    </recommendedName>
</protein>
<accession>O94293</accession>
<gene>
    <name type="ORF">SPBC887.08</name>
</gene>
<name>YOO8_SCHPO</name>
<organism>
    <name type="scientific">Schizosaccharomyces pombe (strain 972 / ATCC 24843)</name>
    <name type="common">Fission yeast</name>
    <dbReference type="NCBI Taxonomy" id="284812"/>
    <lineage>
        <taxon>Eukaryota</taxon>
        <taxon>Fungi</taxon>
        <taxon>Dikarya</taxon>
        <taxon>Ascomycota</taxon>
        <taxon>Taphrinomycotina</taxon>
        <taxon>Schizosaccharomycetes</taxon>
        <taxon>Schizosaccharomycetales</taxon>
        <taxon>Schizosaccharomycetaceae</taxon>
        <taxon>Schizosaccharomyces</taxon>
    </lineage>
</organism>
<keyword id="KW-1185">Reference proteome</keyword>
<sequence length="124" mass="14253">MDLLAIDLDFDVSESKLERNKRLKQKVSIETDGWTPRVQCFGHLSKNGVVLGEEAYILEQSKFAAEEQYYLGNYSLAKKFAFQALDVPTDSSSIEYHRLSSGEINEIEDIIRRCEMKLENKQSN</sequence>
<feature type="chain" id="PRO_0000116875" description="Uncharacterized protein C887.08">
    <location>
        <begin position="1"/>
        <end position="124"/>
    </location>
</feature>
<dbReference type="EMBL" id="CU329671">
    <property type="protein sequence ID" value="CAA21893.1"/>
    <property type="molecule type" value="Genomic_DNA"/>
</dbReference>
<dbReference type="PIR" id="T40733">
    <property type="entry name" value="T40733"/>
</dbReference>
<dbReference type="RefSeq" id="NP_596482.1">
    <property type="nucleotide sequence ID" value="NM_001022402.2"/>
</dbReference>
<dbReference type="BioGRID" id="277736">
    <property type="interactions" value="7"/>
</dbReference>
<dbReference type="STRING" id="284812.O94293"/>
<dbReference type="iPTMnet" id="O94293"/>
<dbReference type="PaxDb" id="4896-SPBC887.08.1"/>
<dbReference type="EnsemblFungi" id="SPBC887.08.1">
    <property type="protein sequence ID" value="SPBC887.08.1:pep"/>
    <property type="gene ID" value="SPBC887.08"/>
</dbReference>
<dbReference type="KEGG" id="spo:2541222"/>
<dbReference type="PomBase" id="SPBC887.08"/>
<dbReference type="VEuPathDB" id="FungiDB:SPBC887.08"/>
<dbReference type="HOGENOM" id="CLU_2051000_0_0_1"/>
<dbReference type="InParanoid" id="O94293"/>
<dbReference type="OMA" id="FAAEEQY"/>
<dbReference type="PRO" id="PR:O94293"/>
<dbReference type="Proteomes" id="UP000002485">
    <property type="component" value="Chromosome II"/>
</dbReference>
<dbReference type="GO" id="GO:0005829">
    <property type="term" value="C:cytosol"/>
    <property type="evidence" value="ECO:0007005"/>
    <property type="project" value="PomBase"/>
</dbReference>
<dbReference type="GO" id="GO:0005634">
    <property type="term" value="C:nucleus"/>
    <property type="evidence" value="ECO:0007005"/>
    <property type="project" value="PomBase"/>
</dbReference>
<proteinExistence type="predicted"/>